<name>EFTU1_STRCU</name>
<reference key="1">
    <citation type="journal article" date="1995" name="Biochem. Biophys. Res. Commun.">
        <title>Sequencing of the tuf1 gene and the phosphorylation pattern of EF-Tu1 during development and differentiation in Streptomyces collinus producing kirromycin.</title>
        <authorList>
            <person name="Mikulik K."/>
            <person name="Zhulanova E."/>
        </authorList>
    </citation>
    <scope>NUCLEOTIDE SEQUENCE [GENOMIC DNA]</scope>
    <source>
        <strain>DSM 40733 / Tue 365</strain>
    </source>
</reference>
<proteinExistence type="inferred from homology"/>
<organism>
    <name type="scientific">Streptomyces collinus</name>
    <dbReference type="NCBI Taxonomy" id="42684"/>
    <lineage>
        <taxon>Bacteria</taxon>
        <taxon>Bacillati</taxon>
        <taxon>Actinomycetota</taxon>
        <taxon>Actinomycetes</taxon>
        <taxon>Kitasatosporales</taxon>
        <taxon>Streptomycetaceae</taxon>
        <taxon>Streptomyces</taxon>
    </lineage>
</organism>
<sequence length="397" mass="43879">MAKAKFERTKPHVNIGTIGHIDHGKTTLTAAITKVLHDAFPDLNEASAFDQIDKAPEERQRGITISIAHVEYQTETRHYAHVDCPGHADYIKNMITGAAQMDGAILVVAATDGPMPQTKEHVLLARQVGVPYIVVALNKADMVDDEEILELVELEVRELLSEYEFPGDDLPVVRVSALKALEGDKEWGQSVLNLMQAVDENIPEPERDVDKPFLMPIEDVFTITGRGTVVTGRIERGVLKVNETVDIIGIKTEKTTTTVTGIEMFRKLLDEGQAGENVGLLLRGIKREDVERGQVIIKPGSVTPHTEFEAQAYILSKDEGGRHTPFFNNYRPQFYFRTTDVTGVVTLPEGTEMVMPGDNTEMKVELIQPVAMEEGLKFAIREGGRTVGAGQVTKINK</sequence>
<feature type="chain" id="PRO_0000091403" description="Elongation factor Tu-1">
    <location>
        <begin position="1"/>
        <end position="397"/>
    </location>
</feature>
<feature type="domain" description="tr-type G">
    <location>
        <begin position="10"/>
        <end position="206"/>
    </location>
</feature>
<feature type="region of interest" description="G1" evidence="1">
    <location>
        <begin position="19"/>
        <end position="26"/>
    </location>
</feature>
<feature type="region of interest" description="G2" evidence="1">
    <location>
        <begin position="62"/>
        <end position="66"/>
    </location>
</feature>
<feature type="region of interest" description="G3" evidence="1">
    <location>
        <begin position="83"/>
        <end position="86"/>
    </location>
</feature>
<feature type="region of interest" description="G4" evidence="1">
    <location>
        <begin position="138"/>
        <end position="141"/>
    </location>
</feature>
<feature type="region of interest" description="G5" evidence="1">
    <location>
        <begin position="176"/>
        <end position="178"/>
    </location>
</feature>
<feature type="binding site" evidence="2">
    <location>
        <begin position="19"/>
        <end position="26"/>
    </location>
    <ligand>
        <name>GTP</name>
        <dbReference type="ChEBI" id="CHEBI:37565"/>
    </ligand>
</feature>
<feature type="binding site" evidence="2">
    <location>
        <position position="26"/>
    </location>
    <ligand>
        <name>Mg(2+)</name>
        <dbReference type="ChEBI" id="CHEBI:18420"/>
    </ligand>
</feature>
<feature type="binding site" evidence="2">
    <location>
        <begin position="83"/>
        <end position="87"/>
    </location>
    <ligand>
        <name>GTP</name>
        <dbReference type="ChEBI" id="CHEBI:37565"/>
    </ligand>
</feature>
<feature type="binding site" evidence="2">
    <location>
        <begin position="138"/>
        <end position="141"/>
    </location>
    <ligand>
        <name>GTP</name>
        <dbReference type="ChEBI" id="CHEBI:37565"/>
    </ligand>
</feature>
<feature type="modified residue" description="Phosphothreonine" evidence="1">
    <location>
        <position position="386"/>
    </location>
</feature>
<dbReference type="EC" id="3.6.5.3" evidence="2"/>
<dbReference type="EMBL" id="S79408">
    <property type="protein sequence ID" value="AAC60496.1"/>
    <property type="molecule type" value="Genomic_DNA"/>
</dbReference>
<dbReference type="PIR" id="PC4060">
    <property type="entry name" value="PC4060"/>
</dbReference>
<dbReference type="RefSeq" id="WP_020941664.1">
    <property type="nucleotide sequence ID" value="NZ_CP052032.1"/>
</dbReference>
<dbReference type="SMR" id="Q53871"/>
<dbReference type="OMA" id="EGDKEWG"/>
<dbReference type="GO" id="GO:0005829">
    <property type="term" value="C:cytosol"/>
    <property type="evidence" value="ECO:0007669"/>
    <property type="project" value="TreeGrafter"/>
</dbReference>
<dbReference type="GO" id="GO:0005525">
    <property type="term" value="F:GTP binding"/>
    <property type="evidence" value="ECO:0007669"/>
    <property type="project" value="UniProtKB-UniRule"/>
</dbReference>
<dbReference type="GO" id="GO:0003924">
    <property type="term" value="F:GTPase activity"/>
    <property type="evidence" value="ECO:0007669"/>
    <property type="project" value="InterPro"/>
</dbReference>
<dbReference type="GO" id="GO:0003746">
    <property type="term" value="F:translation elongation factor activity"/>
    <property type="evidence" value="ECO:0007669"/>
    <property type="project" value="UniProtKB-UniRule"/>
</dbReference>
<dbReference type="CDD" id="cd01884">
    <property type="entry name" value="EF_Tu"/>
    <property type="match status" value="1"/>
</dbReference>
<dbReference type="CDD" id="cd03697">
    <property type="entry name" value="EFTU_II"/>
    <property type="match status" value="1"/>
</dbReference>
<dbReference type="CDD" id="cd03707">
    <property type="entry name" value="EFTU_III"/>
    <property type="match status" value="1"/>
</dbReference>
<dbReference type="FunFam" id="2.40.30.10:FF:000001">
    <property type="entry name" value="Elongation factor Tu"/>
    <property type="match status" value="1"/>
</dbReference>
<dbReference type="FunFam" id="3.40.50.300:FF:000003">
    <property type="entry name" value="Elongation factor Tu"/>
    <property type="match status" value="1"/>
</dbReference>
<dbReference type="Gene3D" id="3.40.50.300">
    <property type="entry name" value="P-loop containing nucleotide triphosphate hydrolases"/>
    <property type="match status" value="1"/>
</dbReference>
<dbReference type="Gene3D" id="2.40.30.10">
    <property type="entry name" value="Translation factors"/>
    <property type="match status" value="2"/>
</dbReference>
<dbReference type="HAMAP" id="MF_00118_B">
    <property type="entry name" value="EF_Tu_B"/>
    <property type="match status" value="1"/>
</dbReference>
<dbReference type="InterPro" id="IPR041709">
    <property type="entry name" value="EF-Tu_GTP-bd"/>
</dbReference>
<dbReference type="InterPro" id="IPR050055">
    <property type="entry name" value="EF-Tu_GTPase"/>
</dbReference>
<dbReference type="InterPro" id="IPR004161">
    <property type="entry name" value="EFTu-like_2"/>
</dbReference>
<dbReference type="InterPro" id="IPR033720">
    <property type="entry name" value="EFTU_2"/>
</dbReference>
<dbReference type="InterPro" id="IPR031157">
    <property type="entry name" value="G_TR_CS"/>
</dbReference>
<dbReference type="InterPro" id="IPR027417">
    <property type="entry name" value="P-loop_NTPase"/>
</dbReference>
<dbReference type="InterPro" id="IPR005225">
    <property type="entry name" value="Small_GTP-bd"/>
</dbReference>
<dbReference type="InterPro" id="IPR000795">
    <property type="entry name" value="T_Tr_GTP-bd_dom"/>
</dbReference>
<dbReference type="InterPro" id="IPR009000">
    <property type="entry name" value="Transl_B-barrel_sf"/>
</dbReference>
<dbReference type="InterPro" id="IPR009001">
    <property type="entry name" value="Transl_elong_EF1A/Init_IF2_C"/>
</dbReference>
<dbReference type="InterPro" id="IPR004541">
    <property type="entry name" value="Transl_elong_EFTu/EF1A_bac/org"/>
</dbReference>
<dbReference type="InterPro" id="IPR004160">
    <property type="entry name" value="Transl_elong_EFTu/EF1A_C"/>
</dbReference>
<dbReference type="NCBIfam" id="TIGR00485">
    <property type="entry name" value="EF-Tu"/>
    <property type="match status" value="1"/>
</dbReference>
<dbReference type="NCBIfam" id="NF000766">
    <property type="entry name" value="PRK00049.1"/>
    <property type="match status" value="1"/>
</dbReference>
<dbReference type="NCBIfam" id="NF009372">
    <property type="entry name" value="PRK12735.1"/>
    <property type="match status" value="1"/>
</dbReference>
<dbReference type="NCBIfam" id="NF009373">
    <property type="entry name" value="PRK12736.1"/>
    <property type="match status" value="1"/>
</dbReference>
<dbReference type="NCBIfam" id="TIGR00231">
    <property type="entry name" value="small_GTP"/>
    <property type="match status" value="1"/>
</dbReference>
<dbReference type="PANTHER" id="PTHR43721:SF22">
    <property type="entry name" value="ELONGATION FACTOR TU, MITOCHONDRIAL"/>
    <property type="match status" value="1"/>
</dbReference>
<dbReference type="PANTHER" id="PTHR43721">
    <property type="entry name" value="ELONGATION FACTOR TU-RELATED"/>
    <property type="match status" value="1"/>
</dbReference>
<dbReference type="Pfam" id="PF00009">
    <property type="entry name" value="GTP_EFTU"/>
    <property type="match status" value="1"/>
</dbReference>
<dbReference type="Pfam" id="PF03144">
    <property type="entry name" value="GTP_EFTU_D2"/>
    <property type="match status" value="1"/>
</dbReference>
<dbReference type="Pfam" id="PF03143">
    <property type="entry name" value="GTP_EFTU_D3"/>
    <property type="match status" value="1"/>
</dbReference>
<dbReference type="PRINTS" id="PR00315">
    <property type="entry name" value="ELONGATNFCT"/>
</dbReference>
<dbReference type="SUPFAM" id="SSF50465">
    <property type="entry name" value="EF-Tu/eEF-1alpha/eIF2-gamma C-terminal domain"/>
    <property type="match status" value="1"/>
</dbReference>
<dbReference type="SUPFAM" id="SSF52540">
    <property type="entry name" value="P-loop containing nucleoside triphosphate hydrolases"/>
    <property type="match status" value="1"/>
</dbReference>
<dbReference type="SUPFAM" id="SSF50447">
    <property type="entry name" value="Translation proteins"/>
    <property type="match status" value="1"/>
</dbReference>
<dbReference type="PROSITE" id="PS00301">
    <property type="entry name" value="G_TR_1"/>
    <property type="match status" value="1"/>
</dbReference>
<dbReference type="PROSITE" id="PS51722">
    <property type="entry name" value="G_TR_2"/>
    <property type="match status" value="1"/>
</dbReference>
<protein>
    <recommendedName>
        <fullName evidence="2">Elongation factor Tu-1</fullName>
        <shortName evidence="2">EF-Tu-1</shortName>
        <ecNumber evidence="2">3.6.5.3</ecNumber>
    </recommendedName>
</protein>
<comment type="function">
    <text evidence="2">GTP hydrolase that promotes the GTP-dependent binding of aminoacyl-tRNA to the A-site of ribosomes during protein biosynthesis.</text>
</comment>
<comment type="catalytic activity">
    <reaction evidence="2">
        <text>GTP + H2O = GDP + phosphate + H(+)</text>
        <dbReference type="Rhea" id="RHEA:19669"/>
        <dbReference type="ChEBI" id="CHEBI:15377"/>
        <dbReference type="ChEBI" id="CHEBI:15378"/>
        <dbReference type="ChEBI" id="CHEBI:37565"/>
        <dbReference type="ChEBI" id="CHEBI:43474"/>
        <dbReference type="ChEBI" id="CHEBI:58189"/>
        <dbReference type="EC" id="3.6.5.3"/>
    </reaction>
    <physiologicalReaction direction="left-to-right" evidence="2">
        <dbReference type="Rhea" id="RHEA:19670"/>
    </physiologicalReaction>
</comment>
<comment type="subunit">
    <text>Monomer.</text>
</comment>
<comment type="subcellular location">
    <subcellularLocation>
        <location evidence="2">Cytoplasm</location>
    </subcellularLocation>
</comment>
<comment type="PTM">
    <text>Phosphorylated on threonine and serine.</text>
</comment>
<comment type="similarity">
    <text evidence="2">Belongs to the TRAFAC class translation factor GTPase superfamily. Classic translation factor GTPase family. EF-Tu/EF-1A subfamily.</text>
</comment>
<keyword id="KW-0963">Cytoplasm</keyword>
<keyword id="KW-0251">Elongation factor</keyword>
<keyword id="KW-0342">GTP-binding</keyword>
<keyword id="KW-0378">Hydrolase</keyword>
<keyword id="KW-0460">Magnesium</keyword>
<keyword id="KW-0479">Metal-binding</keyword>
<keyword id="KW-0547">Nucleotide-binding</keyword>
<keyword id="KW-0597">Phosphoprotein</keyword>
<keyword id="KW-0648">Protein biosynthesis</keyword>
<evidence type="ECO:0000250" key="1"/>
<evidence type="ECO:0000255" key="2">
    <source>
        <dbReference type="HAMAP-Rule" id="MF_00118"/>
    </source>
</evidence>
<gene>
    <name evidence="2" type="primary">tuf1</name>
</gene>
<accession>Q53871</accession>